<sequence>MKMQSNITKIIIIMSLLIGVGALYVLLSLSTPKKPLAGQFNIYEDKIKIGGPFELIDQNGEIFNSDKLRGHLSLIYFGFTSCPDICPTSLNKITNIVEILHQNKIDIIPVFITVDPKRDTPEVLKEYIKNFHPKFISLTGNEHQIKDVTDKFKVFYARVNSDNDDQNYMIDHSSFTYLIDKNGRYMKHFYLDISAKEIMELFKNE</sequence>
<keyword id="KW-0186">Copper</keyword>
<keyword id="KW-0479">Metal-binding</keyword>
<keyword id="KW-1185">Reference proteome</keyword>
<proteinExistence type="inferred from homology"/>
<organism>
    <name type="scientific">Rickettsia prowazekii (strain Madrid E)</name>
    <dbReference type="NCBI Taxonomy" id="272947"/>
    <lineage>
        <taxon>Bacteria</taxon>
        <taxon>Pseudomonadati</taxon>
        <taxon>Pseudomonadota</taxon>
        <taxon>Alphaproteobacteria</taxon>
        <taxon>Rickettsiales</taxon>
        <taxon>Rickettsiaceae</taxon>
        <taxon>Rickettsieae</taxon>
        <taxon>Rickettsia</taxon>
        <taxon>typhus group</taxon>
    </lineage>
</organism>
<reference key="1">
    <citation type="journal article" date="1998" name="Nature">
        <title>The genome sequence of Rickettsia prowazekii and the origin of mitochondria.</title>
        <authorList>
            <person name="Andersson S.G.E."/>
            <person name="Zomorodipour A."/>
            <person name="Andersson J.O."/>
            <person name="Sicheritz-Ponten T."/>
            <person name="Alsmark U.C.M."/>
            <person name="Podowski R.M."/>
            <person name="Naeslund A.K."/>
            <person name="Eriksson A.-S."/>
            <person name="Winkler H.H."/>
            <person name="Kurland C.G."/>
        </authorList>
    </citation>
    <scope>NUCLEOTIDE SEQUENCE [LARGE SCALE GENOMIC DNA]</scope>
    <source>
        <strain>Madrid E</strain>
    </source>
</reference>
<gene>
    <name type="ordered locus">RP587</name>
</gene>
<comment type="similarity">
    <text evidence="2">Belongs to the SCO1/2 family.</text>
</comment>
<protein>
    <recommendedName>
        <fullName>SCO2-like protein RP587</fullName>
    </recommendedName>
</protein>
<name>SCO22_RICPR</name>
<dbReference type="EMBL" id="AJ235272">
    <property type="protein sequence ID" value="CAA15032.1"/>
    <property type="molecule type" value="Genomic_DNA"/>
</dbReference>
<dbReference type="PIR" id="F71663">
    <property type="entry name" value="F71663"/>
</dbReference>
<dbReference type="RefSeq" id="NP_220956.1">
    <property type="nucleotide sequence ID" value="NC_000963.1"/>
</dbReference>
<dbReference type="RefSeq" id="WP_004599005.1">
    <property type="nucleotide sequence ID" value="NC_000963.1"/>
</dbReference>
<dbReference type="SMR" id="Q9ZCW7"/>
<dbReference type="STRING" id="272947.gene:17555667"/>
<dbReference type="EnsemblBacteria" id="CAA15032">
    <property type="protein sequence ID" value="CAA15032"/>
    <property type="gene ID" value="CAA15032"/>
</dbReference>
<dbReference type="KEGG" id="rpr:RP587"/>
<dbReference type="PATRIC" id="fig|272947.5.peg.603"/>
<dbReference type="eggNOG" id="COG1999">
    <property type="taxonomic scope" value="Bacteria"/>
</dbReference>
<dbReference type="HOGENOM" id="CLU_050131_3_1_5"/>
<dbReference type="OrthoDB" id="9790194at2"/>
<dbReference type="Proteomes" id="UP000002480">
    <property type="component" value="Chromosome"/>
</dbReference>
<dbReference type="GO" id="GO:0046872">
    <property type="term" value="F:metal ion binding"/>
    <property type="evidence" value="ECO:0007669"/>
    <property type="project" value="UniProtKB-KW"/>
</dbReference>
<dbReference type="CDD" id="cd02968">
    <property type="entry name" value="SCO"/>
    <property type="match status" value="1"/>
</dbReference>
<dbReference type="FunFam" id="3.40.30.10:FF:000013">
    <property type="entry name" value="Blast:Protein SCO1 homolog, mitochondrial"/>
    <property type="match status" value="1"/>
</dbReference>
<dbReference type="Gene3D" id="3.40.30.10">
    <property type="entry name" value="Glutaredoxin"/>
    <property type="match status" value="1"/>
</dbReference>
<dbReference type="InterPro" id="IPR003782">
    <property type="entry name" value="SCO1/SenC"/>
</dbReference>
<dbReference type="InterPro" id="IPR036249">
    <property type="entry name" value="Thioredoxin-like_sf"/>
</dbReference>
<dbReference type="PANTHER" id="PTHR12151">
    <property type="entry name" value="ELECTRON TRANSPORT PROTIN SCO1/SENC FAMILY MEMBER"/>
    <property type="match status" value="1"/>
</dbReference>
<dbReference type="PANTHER" id="PTHR12151:SF25">
    <property type="entry name" value="LINALOOL DEHYDRATASE_ISOMERASE DOMAIN-CONTAINING PROTEIN"/>
    <property type="match status" value="1"/>
</dbReference>
<dbReference type="Pfam" id="PF02630">
    <property type="entry name" value="SCO1-SenC"/>
    <property type="match status" value="1"/>
</dbReference>
<dbReference type="SUPFAM" id="SSF52833">
    <property type="entry name" value="Thioredoxin-like"/>
    <property type="match status" value="1"/>
</dbReference>
<evidence type="ECO:0000250" key="1"/>
<evidence type="ECO:0000305" key="2"/>
<accession>Q9ZCW7</accession>
<feature type="chain" id="PRO_0000173880" description="SCO2-like protein RP587">
    <location>
        <begin position="1"/>
        <end position="205"/>
    </location>
</feature>
<feature type="binding site" evidence="1">
    <location>
        <position position="82"/>
    </location>
    <ligand>
        <name>Cu cation</name>
        <dbReference type="ChEBI" id="CHEBI:23378"/>
    </ligand>
</feature>
<feature type="binding site" evidence="1">
    <location>
        <position position="86"/>
    </location>
    <ligand>
        <name>Cu cation</name>
        <dbReference type="ChEBI" id="CHEBI:23378"/>
    </ligand>
</feature>
<feature type="binding site" evidence="1">
    <location>
        <position position="172"/>
    </location>
    <ligand>
        <name>Cu cation</name>
        <dbReference type="ChEBI" id="CHEBI:23378"/>
    </ligand>
</feature>